<keyword id="KW-0066">ATP synthesis</keyword>
<keyword id="KW-1003">Cell membrane</keyword>
<keyword id="KW-0139">CF(1)</keyword>
<keyword id="KW-0375">Hydrogen ion transport</keyword>
<keyword id="KW-0406">Ion transport</keyword>
<keyword id="KW-0472">Membrane</keyword>
<keyword id="KW-1185">Reference proteome</keyword>
<keyword id="KW-0813">Transport</keyword>
<reference key="1">
    <citation type="journal article" date="2003" name="Proc. Natl. Acad. Sci. U.S.A.">
        <title>Complete genome sequence of Lactobacillus plantarum WCFS1.</title>
        <authorList>
            <person name="Kleerebezem M."/>
            <person name="Boekhorst J."/>
            <person name="van Kranenburg R."/>
            <person name="Molenaar D."/>
            <person name="Kuipers O.P."/>
            <person name="Leer R."/>
            <person name="Tarchini R."/>
            <person name="Peters S.A."/>
            <person name="Sandbrink H.M."/>
            <person name="Fiers M.W.E.J."/>
            <person name="Stiekema W."/>
            <person name="Klein Lankhorst R.M."/>
            <person name="Bron P.A."/>
            <person name="Hoffer S.M."/>
            <person name="Nierop Groot M.N."/>
            <person name="Kerkhoven R."/>
            <person name="De Vries M."/>
            <person name="Ursing B."/>
            <person name="De Vos W.M."/>
            <person name="Siezen R.J."/>
        </authorList>
    </citation>
    <scope>NUCLEOTIDE SEQUENCE [LARGE SCALE GENOMIC DNA]</scope>
    <source>
        <strain>ATCC BAA-793 / NCIMB 8826 / WCFS1</strain>
    </source>
</reference>
<reference key="2">
    <citation type="journal article" date="2012" name="J. Bacteriol.">
        <title>Complete resequencing and reannotation of the Lactobacillus plantarum WCFS1 genome.</title>
        <authorList>
            <person name="Siezen R.J."/>
            <person name="Francke C."/>
            <person name="Renckens B."/>
            <person name="Boekhorst J."/>
            <person name="Wels M."/>
            <person name="Kleerebezem M."/>
            <person name="van Hijum S.A."/>
        </authorList>
    </citation>
    <scope>NUCLEOTIDE SEQUENCE [LARGE SCALE GENOMIC DNA]</scope>
    <scope>GENOME REANNOTATION</scope>
    <source>
        <strain>ATCC BAA-793 / NCIMB 8826 / WCFS1</strain>
    </source>
</reference>
<accession>Q88UU4</accession>
<accession>F9UQR2</accession>
<gene>
    <name evidence="1" type="primary">atpC</name>
    <name type="ordered locus">lp_2363</name>
</gene>
<dbReference type="EMBL" id="AL935263">
    <property type="protein sequence ID" value="CCC79551.1"/>
    <property type="molecule type" value="Genomic_DNA"/>
</dbReference>
<dbReference type="RefSeq" id="WP_003641444.1">
    <property type="nucleotide sequence ID" value="NC_004567.2"/>
</dbReference>
<dbReference type="RefSeq" id="YP_004890065.1">
    <property type="nucleotide sequence ID" value="NC_004567.2"/>
</dbReference>
<dbReference type="SMR" id="Q88UU4"/>
<dbReference type="STRING" id="220668.lp_2363"/>
<dbReference type="EnsemblBacteria" id="CCC79551">
    <property type="protein sequence ID" value="CCC79551"/>
    <property type="gene ID" value="lp_2363"/>
</dbReference>
<dbReference type="KEGG" id="lpl:lp_2363"/>
<dbReference type="PATRIC" id="fig|220668.9.peg.1996"/>
<dbReference type="eggNOG" id="COG0355">
    <property type="taxonomic scope" value="Bacteria"/>
</dbReference>
<dbReference type="HOGENOM" id="CLU_084338_1_0_9"/>
<dbReference type="OrthoDB" id="9804110at2"/>
<dbReference type="PhylomeDB" id="Q88UU4"/>
<dbReference type="Proteomes" id="UP000000432">
    <property type="component" value="Chromosome"/>
</dbReference>
<dbReference type="GO" id="GO:0005886">
    <property type="term" value="C:plasma membrane"/>
    <property type="evidence" value="ECO:0007669"/>
    <property type="project" value="UniProtKB-SubCell"/>
</dbReference>
<dbReference type="GO" id="GO:0045259">
    <property type="term" value="C:proton-transporting ATP synthase complex"/>
    <property type="evidence" value="ECO:0007669"/>
    <property type="project" value="UniProtKB-KW"/>
</dbReference>
<dbReference type="GO" id="GO:0005524">
    <property type="term" value="F:ATP binding"/>
    <property type="evidence" value="ECO:0007669"/>
    <property type="project" value="UniProtKB-UniRule"/>
</dbReference>
<dbReference type="GO" id="GO:0046933">
    <property type="term" value="F:proton-transporting ATP synthase activity, rotational mechanism"/>
    <property type="evidence" value="ECO:0007669"/>
    <property type="project" value="UniProtKB-UniRule"/>
</dbReference>
<dbReference type="CDD" id="cd12152">
    <property type="entry name" value="F1-ATPase_delta"/>
    <property type="match status" value="1"/>
</dbReference>
<dbReference type="FunFam" id="1.20.5.440:FF:000001">
    <property type="entry name" value="ATP synthase epsilon chain"/>
    <property type="match status" value="1"/>
</dbReference>
<dbReference type="Gene3D" id="1.20.5.440">
    <property type="entry name" value="ATP synthase delta/epsilon subunit, C-terminal domain"/>
    <property type="match status" value="1"/>
</dbReference>
<dbReference type="Gene3D" id="2.60.15.10">
    <property type="entry name" value="F0F1 ATP synthase delta/epsilon subunit, N-terminal"/>
    <property type="match status" value="1"/>
</dbReference>
<dbReference type="HAMAP" id="MF_00530">
    <property type="entry name" value="ATP_synth_epsil_bac"/>
    <property type="match status" value="1"/>
</dbReference>
<dbReference type="InterPro" id="IPR036794">
    <property type="entry name" value="ATP_F1_dsu/esu_C_sf"/>
</dbReference>
<dbReference type="InterPro" id="IPR001469">
    <property type="entry name" value="ATP_synth_F1_dsu/esu"/>
</dbReference>
<dbReference type="InterPro" id="IPR020546">
    <property type="entry name" value="ATP_synth_F1_dsu/esu_N"/>
</dbReference>
<dbReference type="InterPro" id="IPR020547">
    <property type="entry name" value="ATP_synth_F1_esu_C"/>
</dbReference>
<dbReference type="InterPro" id="IPR036771">
    <property type="entry name" value="ATPsynth_dsu/esu_N"/>
</dbReference>
<dbReference type="NCBIfam" id="TIGR01216">
    <property type="entry name" value="ATP_synt_epsi"/>
    <property type="match status" value="1"/>
</dbReference>
<dbReference type="NCBIfam" id="NF001846">
    <property type="entry name" value="PRK00571.1-3"/>
    <property type="match status" value="1"/>
</dbReference>
<dbReference type="PANTHER" id="PTHR13822">
    <property type="entry name" value="ATP SYNTHASE DELTA/EPSILON CHAIN"/>
    <property type="match status" value="1"/>
</dbReference>
<dbReference type="PANTHER" id="PTHR13822:SF10">
    <property type="entry name" value="ATP SYNTHASE EPSILON CHAIN, CHLOROPLASTIC"/>
    <property type="match status" value="1"/>
</dbReference>
<dbReference type="Pfam" id="PF00401">
    <property type="entry name" value="ATP-synt_DE"/>
    <property type="match status" value="1"/>
</dbReference>
<dbReference type="Pfam" id="PF02823">
    <property type="entry name" value="ATP-synt_DE_N"/>
    <property type="match status" value="1"/>
</dbReference>
<dbReference type="SUPFAM" id="SSF46604">
    <property type="entry name" value="Epsilon subunit of F1F0-ATP synthase C-terminal domain"/>
    <property type="match status" value="1"/>
</dbReference>
<dbReference type="SUPFAM" id="SSF51344">
    <property type="entry name" value="Epsilon subunit of F1F0-ATP synthase N-terminal domain"/>
    <property type="match status" value="1"/>
</dbReference>
<evidence type="ECO:0000255" key="1">
    <source>
        <dbReference type="HAMAP-Rule" id="MF_00530"/>
    </source>
</evidence>
<feature type="chain" id="PRO_0000188149" description="ATP synthase epsilon chain">
    <location>
        <begin position="1"/>
        <end position="142"/>
    </location>
</feature>
<comment type="function">
    <text evidence="1">Produces ATP from ADP in the presence of a proton gradient across the membrane.</text>
</comment>
<comment type="subunit">
    <text>F-type ATPases have 2 components, CF(1) - the catalytic core - and CF(0) - the membrane proton channel. CF(1) has five subunits: alpha(3), beta(3), gamma(1), delta(1), epsilon(1). CF(0) has three main subunits: a, b and c.</text>
</comment>
<comment type="subcellular location">
    <subcellularLocation>
        <location evidence="1">Cell membrane</location>
        <topology evidence="1">Peripheral membrane protein</topology>
    </subcellularLocation>
</comment>
<comment type="similarity">
    <text evidence="1">Belongs to the ATPase epsilon chain family.</text>
</comment>
<sequence length="142" mass="15698">MADNAKSLTVSIVTPDGQVYENKTPMLIVRTIDGELGILPNHIPVIASLAIDEVRIKQLESDQEDDEIAVNGGFVEFSNNTATIVADSAERQNDIDVARAENARKRAETRIQNAQQKHDDAELARAQVALRRAMNRLNVARH</sequence>
<protein>
    <recommendedName>
        <fullName evidence="1">ATP synthase epsilon chain</fullName>
    </recommendedName>
    <alternativeName>
        <fullName evidence="1">ATP synthase F1 sector epsilon subunit</fullName>
    </alternativeName>
    <alternativeName>
        <fullName evidence="1">F-ATPase epsilon subunit</fullName>
    </alternativeName>
</protein>
<proteinExistence type="inferred from homology"/>
<name>ATPE_LACPL</name>
<organism>
    <name type="scientific">Lactiplantibacillus plantarum (strain ATCC BAA-793 / NCIMB 8826 / WCFS1)</name>
    <name type="common">Lactobacillus plantarum</name>
    <dbReference type="NCBI Taxonomy" id="220668"/>
    <lineage>
        <taxon>Bacteria</taxon>
        <taxon>Bacillati</taxon>
        <taxon>Bacillota</taxon>
        <taxon>Bacilli</taxon>
        <taxon>Lactobacillales</taxon>
        <taxon>Lactobacillaceae</taxon>
        <taxon>Lactiplantibacillus</taxon>
    </lineage>
</organism>